<evidence type="ECO:0000255" key="1">
    <source>
        <dbReference type="HAMAP-Rule" id="MF_00379"/>
    </source>
</evidence>
<comment type="function">
    <text evidence="1">Exhibits a very high intrinsic GTPase hydrolysis rate. Involved in the addition of a carboxymethylaminomethyl (cmnm) group at the wobble position (U34) of certain tRNAs, forming tRNA-cmnm(5)s(2)U34.</text>
</comment>
<comment type="cofactor">
    <cofactor evidence="1">
        <name>K(+)</name>
        <dbReference type="ChEBI" id="CHEBI:29103"/>
    </cofactor>
    <text evidence="1">Binds 1 potassium ion per subunit.</text>
</comment>
<comment type="subunit">
    <text evidence="1">Homodimer. Heterotetramer of two MnmE and two MnmG subunits.</text>
</comment>
<comment type="subcellular location">
    <subcellularLocation>
        <location evidence="1">Cytoplasm</location>
    </subcellularLocation>
</comment>
<comment type="similarity">
    <text evidence="1">Belongs to the TRAFAC class TrmE-Era-EngA-EngB-Septin-like GTPase superfamily. TrmE GTPase family.</text>
</comment>
<proteinExistence type="inferred from homology"/>
<feature type="chain" id="PRO_0000188847" description="tRNA modification GTPase MnmE">
    <location>
        <begin position="1"/>
        <end position="458"/>
    </location>
</feature>
<feature type="domain" description="TrmE-type G">
    <location>
        <begin position="220"/>
        <end position="379"/>
    </location>
</feature>
<feature type="binding site" evidence="1">
    <location>
        <position position="22"/>
    </location>
    <ligand>
        <name>(6S)-5-formyl-5,6,7,8-tetrahydrofolate</name>
        <dbReference type="ChEBI" id="CHEBI:57457"/>
    </ligand>
</feature>
<feature type="binding site" evidence="1">
    <location>
        <position position="84"/>
    </location>
    <ligand>
        <name>(6S)-5-formyl-5,6,7,8-tetrahydrofolate</name>
        <dbReference type="ChEBI" id="CHEBI:57457"/>
    </ligand>
</feature>
<feature type="binding site" evidence="1">
    <location>
        <position position="123"/>
    </location>
    <ligand>
        <name>(6S)-5-formyl-5,6,7,8-tetrahydrofolate</name>
        <dbReference type="ChEBI" id="CHEBI:57457"/>
    </ligand>
</feature>
<feature type="binding site" evidence="1">
    <location>
        <begin position="230"/>
        <end position="235"/>
    </location>
    <ligand>
        <name>GTP</name>
        <dbReference type="ChEBI" id="CHEBI:37565"/>
    </ligand>
</feature>
<feature type="binding site" evidence="1">
    <location>
        <position position="230"/>
    </location>
    <ligand>
        <name>K(+)</name>
        <dbReference type="ChEBI" id="CHEBI:29103"/>
    </ligand>
</feature>
<feature type="binding site" evidence="1">
    <location>
        <position position="234"/>
    </location>
    <ligand>
        <name>Mg(2+)</name>
        <dbReference type="ChEBI" id="CHEBI:18420"/>
    </ligand>
</feature>
<feature type="binding site" evidence="1">
    <location>
        <begin position="249"/>
        <end position="255"/>
    </location>
    <ligand>
        <name>GTP</name>
        <dbReference type="ChEBI" id="CHEBI:37565"/>
    </ligand>
</feature>
<feature type="binding site" evidence="1">
    <location>
        <position position="249"/>
    </location>
    <ligand>
        <name>K(+)</name>
        <dbReference type="ChEBI" id="CHEBI:29103"/>
    </ligand>
</feature>
<feature type="binding site" evidence="1">
    <location>
        <position position="251"/>
    </location>
    <ligand>
        <name>K(+)</name>
        <dbReference type="ChEBI" id="CHEBI:29103"/>
    </ligand>
</feature>
<feature type="binding site" evidence="1">
    <location>
        <position position="254"/>
    </location>
    <ligand>
        <name>K(+)</name>
        <dbReference type="ChEBI" id="CHEBI:29103"/>
    </ligand>
</feature>
<feature type="binding site" evidence="1">
    <location>
        <position position="255"/>
    </location>
    <ligand>
        <name>Mg(2+)</name>
        <dbReference type="ChEBI" id="CHEBI:18420"/>
    </ligand>
</feature>
<feature type="binding site" evidence="1">
    <location>
        <begin position="274"/>
        <end position="277"/>
    </location>
    <ligand>
        <name>GTP</name>
        <dbReference type="ChEBI" id="CHEBI:37565"/>
    </ligand>
</feature>
<feature type="binding site" evidence="1">
    <location>
        <position position="458"/>
    </location>
    <ligand>
        <name>(6S)-5-formyl-5,6,7,8-tetrahydrofolate</name>
        <dbReference type="ChEBI" id="CHEBI:57457"/>
    </ligand>
</feature>
<gene>
    <name evidence="1" type="primary">mnmE</name>
    <name evidence="1" type="synonym">trmE</name>
    <name type="ordered locus">BA_5734</name>
    <name type="ordered locus">GBAA_5734</name>
    <name type="ordered locus">BAS5337</name>
</gene>
<keyword id="KW-0963">Cytoplasm</keyword>
<keyword id="KW-0342">GTP-binding</keyword>
<keyword id="KW-0378">Hydrolase</keyword>
<keyword id="KW-0460">Magnesium</keyword>
<keyword id="KW-0479">Metal-binding</keyword>
<keyword id="KW-0547">Nucleotide-binding</keyword>
<keyword id="KW-0630">Potassium</keyword>
<keyword id="KW-1185">Reference proteome</keyword>
<keyword id="KW-0819">tRNA processing</keyword>
<dbReference type="EC" id="3.6.-.-" evidence="1"/>
<dbReference type="EMBL" id="AE016879">
    <property type="protein sequence ID" value="AAP29365.1"/>
    <property type="molecule type" value="Genomic_DNA"/>
</dbReference>
<dbReference type="EMBL" id="AE017334">
    <property type="protein sequence ID" value="AAT70169.1"/>
    <property type="molecule type" value="Genomic_DNA"/>
</dbReference>
<dbReference type="EMBL" id="AE017225">
    <property type="protein sequence ID" value="AAT57624.1"/>
    <property type="molecule type" value="Genomic_DNA"/>
</dbReference>
<dbReference type="RefSeq" id="NP_847879.1">
    <property type="nucleotide sequence ID" value="NC_003997.3"/>
</dbReference>
<dbReference type="RefSeq" id="WP_000393777.1">
    <property type="nucleotide sequence ID" value="NZ_WXXJ01000028.1"/>
</dbReference>
<dbReference type="RefSeq" id="YP_031574.1">
    <property type="nucleotide sequence ID" value="NC_005945.1"/>
</dbReference>
<dbReference type="SMR" id="Q81JD9"/>
<dbReference type="STRING" id="261594.GBAA_5734"/>
<dbReference type="DNASU" id="1085503"/>
<dbReference type="GeneID" id="45025312"/>
<dbReference type="KEGG" id="ban:BA_5734"/>
<dbReference type="KEGG" id="banh:HYU01_28010"/>
<dbReference type="KEGG" id="bar:GBAA_5734"/>
<dbReference type="KEGG" id="bat:BAS5337"/>
<dbReference type="PATRIC" id="fig|198094.11.peg.5695"/>
<dbReference type="eggNOG" id="COG0486">
    <property type="taxonomic scope" value="Bacteria"/>
</dbReference>
<dbReference type="HOGENOM" id="CLU_019624_4_1_9"/>
<dbReference type="OMA" id="EFHCHGG"/>
<dbReference type="OrthoDB" id="9805918at2"/>
<dbReference type="Proteomes" id="UP000000427">
    <property type="component" value="Chromosome"/>
</dbReference>
<dbReference type="Proteomes" id="UP000000594">
    <property type="component" value="Chromosome"/>
</dbReference>
<dbReference type="GO" id="GO:0005829">
    <property type="term" value="C:cytosol"/>
    <property type="evidence" value="ECO:0007669"/>
    <property type="project" value="TreeGrafter"/>
</dbReference>
<dbReference type="GO" id="GO:0005525">
    <property type="term" value="F:GTP binding"/>
    <property type="evidence" value="ECO:0007669"/>
    <property type="project" value="UniProtKB-UniRule"/>
</dbReference>
<dbReference type="GO" id="GO:0003924">
    <property type="term" value="F:GTPase activity"/>
    <property type="evidence" value="ECO:0007669"/>
    <property type="project" value="UniProtKB-UniRule"/>
</dbReference>
<dbReference type="GO" id="GO:0046872">
    <property type="term" value="F:metal ion binding"/>
    <property type="evidence" value="ECO:0007669"/>
    <property type="project" value="UniProtKB-KW"/>
</dbReference>
<dbReference type="GO" id="GO:0030488">
    <property type="term" value="P:tRNA methylation"/>
    <property type="evidence" value="ECO:0007669"/>
    <property type="project" value="TreeGrafter"/>
</dbReference>
<dbReference type="GO" id="GO:0002098">
    <property type="term" value="P:tRNA wobble uridine modification"/>
    <property type="evidence" value="ECO:0007669"/>
    <property type="project" value="TreeGrafter"/>
</dbReference>
<dbReference type="CDD" id="cd04164">
    <property type="entry name" value="trmE"/>
    <property type="match status" value="1"/>
</dbReference>
<dbReference type="CDD" id="cd14858">
    <property type="entry name" value="TrmE_N"/>
    <property type="match status" value="1"/>
</dbReference>
<dbReference type="FunFam" id="3.30.1360.120:FF:000003">
    <property type="entry name" value="tRNA modification GTPase MnmE"/>
    <property type="match status" value="1"/>
</dbReference>
<dbReference type="FunFam" id="3.40.50.300:FF:000494">
    <property type="entry name" value="tRNA modification GTPase MnmE"/>
    <property type="match status" value="1"/>
</dbReference>
<dbReference type="Gene3D" id="3.40.50.300">
    <property type="entry name" value="P-loop containing nucleotide triphosphate hydrolases"/>
    <property type="match status" value="1"/>
</dbReference>
<dbReference type="Gene3D" id="3.30.1360.120">
    <property type="entry name" value="Probable tRNA modification gtpase trme, domain 1"/>
    <property type="match status" value="1"/>
</dbReference>
<dbReference type="Gene3D" id="1.20.120.430">
    <property type="entry name" value="tRNA modification GTPase MnmE domain 2"/>
    <property type="match status" value="1"/>
</dbReference>
<dbReference type="HAMAP" id="MF_00379">
    <property type="entry name" value="GTPase_MnmE"/>
    <property type="match status" value="1"/>
</dbReference>
<dbReference type="InterPro" id="IPR031168">
    <property type="entry name" value="G_TrmE"/>
</dbReference>
<dbReference type="InterPro" id="IPR006073">
    <property type="entry name" value="GTP-bd"/>
</dbReference>
<dbReference type="InterPro" id="IPR018948">
    <property type="entry name" value="GTP-bd_TrmE_N"/>
</dbReference>
<dbReference type="InterPro" id="IPR004520">
    <property type="entry name" value="GTPase_MnmE"/>
</dbReference>
<dbReference type="InterPro" id="IPR027368">
    <property type="entry name" value="MnmE_dom2"/>
</dbReference>
<dbReference type="InterPro" id="IPR025867">
    <property type="entry name" value="MnmE_helical"/>
</dbReference>
<dbReference type="InterPro" id="IPR027417">
    <property type="entry name" value="P-loop_NTPase"/>
</dbReference>
<dbReference type="InterPro" id="IPR005225">
    <property type="entry name" value="Small_GTP-bd"/>
</dbReference>
<dbReference type="InterPro" id="IPR027266">
    <property type="entry name" value="TrmE/GcvT_dom1"/>
</dbReference>
<dbReference type="NCBIfam" id="TIGR00450">
    <property type="entry name" value="mnmE_trmE_thdF"/>
    <property type="match status" value="1"/>
</dbReference>
<dbReference type="NCBIfam" id="NF003661">
    <property type="entry name" value="PRK05291.1-3"/>
    <property type="match status" value="1"/>
</dbReference>
<dbReference type="NCBIfam" id="TIGR00231">
    <property type="entry name" value="small_GTP"/>
    <property type="match status" value="1"/>
</dbReference>
<dbReference type="PANTHER" id="PTHR42714">
    <property type="entry name" value="TRNA MODIFICATION GTPASE GTPBP3"/>
    <property type="match status" value="1"/>
</dbReference>
<dbReference type="PANTHER" id="PTHR42714:SF2">
    <property type="entry name" value="TRNA MODIFICATION GTPASE GTPBP3, MITOCHONDRIAL"/>
    <property type="match status" value="1"/>
</dbReference>
<dbReference type="Pfam" id="PF01926">
    <property type="entry name" value="MMR_HSR1"/>
    <property type="match status" value="1"/>
</dbReference>
<dbReference type="Pfam" id="PF12631">
    <property type="entry name" value="MnmE_helical"/>
    <property type="match status" value="1"/>
</dbReference>
<dbReference type="Pfam" id="PF10396">
    <property type="entry name" value="TrmE_N"/>
    <property type="match status" value="1"/>
</dbReference>
<dbReference type="SUPFAM" id="SSF52540">
    <property type="entry name" value="P-loop containing nucleoside triphosphate hydrolases"/>
    <property type="match status" value="1"/>
</dbReference>
<dbReference type="SUPFAM" id="SSF116878">
    <property type="entry name" value="TrmE connector domain"/>
    <property type="match status" value="1"/>
</dbReference>
<dbReference type="PROSITE" id="PS51709">
    <property type="entry name" value="G_TRME"/>
    <property type="match status" value="1"/>
</dbReference>
<reference key="1">
    <citation type="journal article" date="2003" name="Nature">
        <title>The genome sequence of Bacillus anthracis Ames and comparison to closely related bacteria.</title>
        <authorList>
            <person name="Read T.D."/>
            <person name="Peterson S.N."/>
            <person name="Tourasse N.J."/>
            <person name="Baillie L.W."/>
            <person name="Paulsen I.T."/>
            <person name="Nelson K.E."/>
            <person name="Tettelin H."/>
            <person name="Fouts D.E."/>
            <person name="Eisen J.A."/>
            <person name="Gill S.R."/>
            <person name="Holtzapple E.K."/>
            <person name="Okstad O.A."/>
            <person name="Helgason E."/>
            <person name="Rilstone J."/>
            <person name="Wu M."/>
            <person name="Kolonay J.F."/>
            <person name="Beanan M.J."/>
            <person name="Dodson R.J."/>
            <person name="Brinkac L.M."/>
            <person name="Gwinn M.L."/>
            <person name="DeBoy R.T."/>
            <person name="Madpu R."/>
            <person name="Daugherty S.C."/>
            <person name="Durkin A.S."/>
            <person name="Haft D.H."/>
            <person name="Nelson W.C."/>
            <person name="Peterson J.D."/>
            <person name="Pop M."/>
            <person name="Khouri H.M."/>
            <person name="Radune D."/>
            <person name="Benton J.L."/>
            <person name="Mahamoud Y."/>
            <person name="Jiang L."/>
            <person name="Hance I.R."/>
            <person name="Weidman J.F."/>
            <person name="Berry K.J."/>
            <person name="Plaut R.D."/>
            <person name="Wolf A.M."/>
            <person name="Watkins K.L."/>
            <person name="Nierman W.C."/>
            <person name="Hazen A."/>
            <person name="Cline R.T."/>
            <person name="Redmond C."/>
            <person name="Thwaite J.E."/>
            <person name="White O."/>
            <person name="Salzberg S.L."/>
            <person name="Thomason B."/>
            <person name="Friedlander A.M."/>
            <person name="Koehler T.M."/>
            <person name="Hanna P.C."/>
            <person name="Kolstoe A.-B."/>
            <person name="Fraser C.M."/>
        </authorList>
    </citation>
    <scope>NUCLEOTIDE SEQUENCE [LARGE SCALE GENOMIC DNA]</scope>
    <source>
        <strain>Ames / isolate Porton</strain>
    </source>
</reference>
<reference key="2">
    <citation type="journal article" date="2009" name="J. Bacteriol.">
        <title>The complete genome sequence of Bacillus anthracis Ames 'Ancestor'.</title>
        <authorList>
            <person name="Ravel J."/>
            <person name="Jiang L."/>
            <person name="Stanley S.T."/>
            <person name="Wilson M.R."/>
            <person name="Decker R.S."/>
            <person name="Read T.D."/>
            <person name="Worsham P."/>
            <person name="Keim P.S."/>
            <person name="Salzberg S.L."/>
            <person name="Fraser-Liggett C.M."/>
            <person name="Rasko D.A."/>
        </authorList>
    </citation>
    <scope>NUCLEOTIDE SEQUENCE [LARGE SCALE GENOMIC DNA]</scope>
    <source>
        <strain>Ames ancestor</strain>
    </source>
</reference>
<reference key="3">
    <citation type="submission" date="2004-01" db="EMBL/GenBank/DDBJ databases">
        <title>Complete genome sequence of Bacillus anthracis Sterne.</title>
        <authorList>
            <person name="Brettin T.S."/>
            <person name="Bruce D."/>
            <person name="Challacombe J.F."/>
            <person name="Gilna P."/>
            <person name="Han C."/>
            <person name="Hill K."/>
            <person name="Hitchcock P."/>
            <person name="Jackson P."/>
            <person name="Keim P."/>
            <person name="Longmire J."/>
            <person name="Lucas S."/>
            <person name="Okinaka R."/>
            <person name="Richardson P."/>
            <person name="Rubin E."/>
            <person name="Tice H."/>
        </authorList>
    </citation>
    <scope>NUCLEOTIDE SEQUENCE [LARGE SCALE GENOMIC DNA]</scope>
    <source>
        <strain>Sterne</strain>
    </source>
</reference>
<accession>Q81JD9</accession>
<accession>Q6HQ14</accession>
<organism>
    <name type="scientific">Bacillus anthracis</name>
    <dbReference type="NCBI Taxonomy" id="1392"/>
    <lineage>
        <taxon>Bacteria</taxon>
        <taxon>Bacillati</taxon>
        <taxon>Bacillota</taxon>
        <taxon>Bacilli</taxon>
        <taxon>Bacillales</taxon>
        <taxon>Bacillaceae</taxon>
        <taxon>Bacillus</taxon>
        <taxon>Bacillus cereus group</taxon>
    </lineage>
</organism>
<name>MNME_BACAN</name>
<protein>
    <recommendedName>
        <fullName evidence="1">tRNA modification GTPase MnmE</fullName>
        <ecNumber evidence="1">3.6.-.-</ecNumber>
    </recommendedName>
</protein>
<sequence>MEFDTIAAISTALGEGAIAIVRVSGDDAVEKVNRIFKGKDLTEVPSHTIHYGHIVDLDTNQVIEEVMVSIMRAPRTFTRENIVEINCHGGLVSVNKVLQLILAQGVRLAEPGEFTKRAFLNGRIDLSQAEAVMDLIRAKTDRAMNVAINQMEGRLSKLIGRLRQDILETLAHVEVNIDYPEYDDVEEMTHNILIEKATHVRAEIAKILETSKQGKILREGIATAIIGRPNVGKSSLLNSLVQEKKAIVTDIAGTTRDVIEEYVNVRGVPLKLIDTAGIRETEDVVERIGVERSKEMMSQADLVLVVVNYSETLTNEDEELFRAVQGKDFIVIVNKTDLPQAIDMERVIELAAGNRVITTSLIEEQGIDELEKAIADLFFEGTIDSADVTYVSNARHIGLLTQAGKTIGDAIEAIENGVPIDMVQIDLTRTWEILGEITGDTVHESLIDQLFSQFCLGK</sequence>